<reference key="1">
    <citation type="journal article" date="2007" name="Proc. Natl. Acad. Sci. U.S.A.">
        <title>Genome sequencing and comparative analysis of Saccharomyces cerevisiae strain YJM789.</title>
        <authorList>
            <person name="Wei W."/>
            <person name="McCusker J.H."/>
            <person name="Hyman R.W."/>
            <person name="Jones T."/>
            <person name="Ning Y."/>
            <person name="Cao Z."/>
            <person name="Gu Z."/>
            <person name="Bruno D."/>
            <person name="Miranda M."/>
            <person name="Nguyen M."/>
            <person name="Wilhelmy J."/>
            <person name="Komp C."/>
            <person name="Tamse R."/>
            <person name="Wang X."/>
            <person name="Jia P."/>
            <person name="Luedi P."/>
            <person name="Oefner P.J."/>
            <person name="David L."/>
            <person name="Dietrich F.S."/>
            <person name="Li Y."/>
            <person name="Davis R.W."/>
            <person name="Steinmetz L.M."/>
        </authorList>
    </citation>
    <scope>NUCLEOTIDE SEQUENCE [LARGE SCALE GENOMIC DNA]</scope>
    <source>
        <strain>YJM789</strain>
    </source>
</reference>
<gene>
    <name evidence="1" type="primary">LIP5</name>
    <name type="ORF">SCY_5257</name>
</gene>
<comment type="function">
    <text evidence="1">Catalyzes the radical-mediated insertion of two sulfur atoms into the C-6 and C-8 positions of the octanoyl moiety bound to the lipoyl domains of lipoate-dependent enzymes, thereby converting the octanoylated domains into lipoylated derivatives.</text>
</comment>
<comment type="catalytic activity">
    <reaction evidence="1">
        <text>[[Fe-S] cluster scaffold protein carrying a second [4Fe-4S](2+) cluster] + N(6)-octanoyl-L-lysyl-[protein] + 2 oxidized [2Fe-2S]-[ferredoxin] + 2 S-adenosyl-L-methionine + 4 H(+) = [[Fe-S] cluster scaffold protein] + N(6)-[(R)-dihydrolipoyl]-L-lysyl-[protein] + 4 Fe(3+) + 2 hydrogen sulfide + 2 5'-deoxyadenosine + 2 L-methionine + 2 reduced [2Fe-2S]-[ferredoxin]</text>
        <dbReference type="Rhea" id="RHEA:16585"/>
        <dbReference type="Rhea" id="RHEA-COMP:9928"/>
        <dbReference type="Rhea" id="RHEA-COMP:10000"/>
        <dbReference type="Rhea" id="RHEA-COMP:10001"/>
        <dbReference type="Rhea" id="RHEA-COMP:10475"/>
        <dbReference type="Rhea" id="RHEA-COMP:14568"/>
        <dbReference type="Rhea" id="RHEA-COMP:14569"/>
        <dbReference type="ChEBI" id="CHEBI:15378"/>
        <dbReference type="ChEBI" id="CHEBI:17319"/>
        <dbReference type="ChEBI" id="CHEBI:29034"/>
        <dbReference type="ChEBI" id="CHEBI:29919"/>
        <dbReference type="ChEBI" id="CHEBI:33722"/>
        <dbReference type="ChEBI" id="CHEBI:33737"/>
        <dbReference type="ChEBI" id="CHEBI:33738"/>
        <dbReference type="ChEBI" id="CHEBI:57844"/>
        <dbReference type="ChEBI" id="CHEBI:59789"/>
        <dbReference type="ChEBI" id="CHEBI:78809"/>
        <dbReference type="ChEBI" id="CHEBI:83100"/>
        <dbReference type="EC" id="2.8.1.8"/>
    </reaction>
</comment>
<comment type="cofactor">
    <cofactor evidence="1">
        <name>[4Fe-4S] cluster</name>
        <dbReference type="ChEBI" id="CHEBI:49883"/>
    </cofactor>
    <text evidence="1">Binds 2 [4Fe-4S] clusters per subunit. One cluster is coordinated with 3 cysteines and an exchangeable S-adenosyl-L-methionine.</text>
</comment>
<comment type="pathway">
    <text evidence="1">Protein modification; protein lipoylation via endogenous pathway; protein N(6)-(lipoyl)lysine from octanoyl-[acyl-carrier-protein]: step 2/2.</text>
</comment>
<comment type="subcellular location">
    <subcellularLocation>
        <location evidence="1">Mitochondrion</location>
    </subcellularLocation>
</comment>
<comment type="similarity">
    <text evidence="1">Belongs to the radical SAM superfamily. Lipoyl synthase family.</text>
</comment>
<dbReference type="EC" id="2.8.1.8" evidence="1"/>
<dbReference type="EMBL" id="AAFW02000032">
    <property type="protein sequence ID" value="EDN63532.1"/>
    <property type="molecule type" value="Genomic_DNA"/>
</dbReference>
<dbReference type="SMR" id="A6ZP42"/>
<dbReference type="HOGENOM" id="CLU_033144_0_2_1"/>
<dbReference type="UniPathway" id="UPA00538">
    <property type="reaction ID" value="UER00593"/>
</dbReference>
<dbReference type="Proteomes" id="UP000007060">
    <property type="component" value="Unassembled WGS sequence"/>
</dbReference>
<dbReference type="GO" id="GO:0005739">
    <property type="term" value="C:mitochondrion"/>
    <property type="evidence" value="ECO:0007669"/>
    <property type="project" value="UniProtKB-SubCell"/>
</dbReference>
<dbReference type="GO" id="GO:0051539">
    <property type="term" value="F:4 iron, 4 sulfur cluster binding"/>
    <property type="evidence" value="ECO:0007669"/>
    <property type="project" value="UniProtKB-UniRule"/>
</dbReference>
<dbReference type="GO" id="GO:0016992">
    <property type="term" value="F:lipoate synthase activity"/>
    <property type="evidence" value="ECO:0007669"/>
    <property type="project" value="UniProtKB-UniRule"/>
</dbReference>
<dbReference type="GO" id="GO:0046872">
    <property type="term" value="F:metal ion binding"/>
    <property type="evidence" value="ECO:0007669"/>
    <property type="project" value="UniProtKB-KW"/>
</dbReference>
<dbReference type="CDD" id="cd01335">
    <property type="entry name" value="Radical_SAM"/>
    <property type="match status" value="1"/>
</dbReference>
<dbReference type="FunFam" id="3.20.20.70:FF:000036">
    <property type="entry name" value="Lipoyl synthase, mitochondrial"/>
    <property type="match status" value="1"/>
</dbReference>
<dbReference type="Gene3D" id="3.20.20.70">
    <property type="entry name" value="Aldolase class I"/>
    <property type="match status" value="1"/>
</dbReference>
<dbReference type="HAMAP" id="MF_00206">
    <property type="entry name" value="Lipoyl_synth"/>
    <property type="match status" value="1"/>
</dbReference>
<dbReference type="InterPro" id="IPR013785">
    <property type="entry name" value="Aldolase_TIM"/>
</dbReference>
<dbReference type="InterPro" id="IPR006638">
    <property type="entry name" value="Elp3/MiaA/NifB-like_rSAM"/>
</dbReference>
<dbReference type="InterPro" id="IPR031691">
    <property type="entry name" value="LIAS_N"/>
</dbReference>
<dbReference type="InterPro" id="IPR003698">
    <property type="entry name" value="Lipoyl_synth"/>
</dbReference>
<dbReference type="InterPro" id="IPR007197">
    <property type="entry name" value="rSAM"/>
</dbReference>
<dbReference type="NCBIfam" id="TIGR00510">
    <property type="entry name" value="lipA"/>
    <property type="match status" value="1"/>
</dbReference>
<dbReference type="NCBIfam" id="NF004019">
    <property type="entry name" value="PRK05481.1"/>
    <property type="match status" value="1"/>
</dbReference>
<dbReference type="NCBIfam" id="NF009544">
    <property type="entry name" value="PRK12928.1"/>
    <property type="match status" value="1"/>
</dbReference>
<dbReference type="PANTHER" id="PTHR10949">
    <property type="entry name" value="LIPOYL SYNTHASE"/>
    <property type="match status" value="1"/>
</dbReference>
<dbReference type="PANTHER" id="PTHR10949:SF0">
    <property type="entry name" value="LIPOYL SYNTHASE, MITOCHONDRIAL"/>
    <property type="match status" value="1"/>
</dbReference>
<dbReference type="Pfam" id="PF16881">
    <property type="entry name" value="LIAS_N"/>
    <property type="match status" value="1"/>
</dbReference>
<dbReference type="Pfam" id="PF04055">
    <property type="entry name" value="Radical_SAM"/>
    <property type="match status" value="1"/>
</dbReference>
<dbReference type="PIRSF" id="PIRSF005963">
    <property type="entry name" value="Lipoyl_synth"/>
    <property type="match status" value="1"/>
</dbReference>
<dbReference type="SFLD" id="SFLDF00271">
    <property type="entry name" value="lipoyl_synthase"/>
    <property type="match status" value="1"/>
</dbReference>
<dbReference type="SFLD" id="SFLDG01058">
    <property type="entry name" value="lipoyl_synthase_like"/>
    <property type="match status" value="1"/>
</dbReference>
<dbReference type="SMART" id="SM00729">
    <property type="entry name" value="Elp3"/>
    <property type="match status" value="1"/>
</dbReference>
<dbReference type="SUPFAM" id="SSF102114">
    <property type="entry name" value="Radical SAM enzymes"/>
    <property type="match status" value="1"/>
</dbReference>
<dbReference type="PROSITE" id="PS51918">
    <property type="entry name" value="RADICAL_SAM"/>
    <property type="match status" value="1"/>
</dbReference>
<feature type="transit peptide" description="Mitochondrion" evidence="1">
    <location>
        <begin position="1"/>
        <end position="18"/>
    </location>
</feature>
<feature type="chain" id="PRO_0000398290" description="Lipoyl synthase, mitochondrial">
    <location>
        <begin position="19"/>
        <end position="414"/>
    </location>
</feature>
<feature type="domain" description="Radical SAM core" evidence="2">
    <location>
        <begin position="164"/>
        <end position="385"/>
    </location>
</feature>
<feature type="region of interest" description="Disordered" evidence="3">
    <location>
        <begin position="51"/>
        <end position="75"/>
    </location>
</feature>
<feature type="compositionally biased region" description="Polar residues" evidence="3">
    <location>
        <begin position="51"/>
        <end position="67"/>
    </location>
</feature>
<feature type="binding site" evidence="1">
    <location>
        <position position="150"/>
    </location>
    <ligand>
        <name>[4Fe-4S] cluster</name>
        <dbReference type="ChEBI" id="CHEBI:49883"/>
        <label>1</label>
    </ligand>
</feature>
<feature type="binding site" evidence="1">
    <location>
        <position position="155"/>
    </location>
    <ligand>
        <name>[4Fe-4S] cluster</name>
        <dbReference type="ChEBI" id="CHEBI:49883"/>
        <label>1</label>
    </ligand>
</feature>
<feature type="binding site" evidence="1">
    <location>
        <position position="161"/>
    </location>
    <ligand>
        <name>[4Fe-4S] cluster</name>
        <dbReference type="ChEBI" id="CHEBI:49883"/>
        <label>1</label>
    </ligand>
</feature>
<feature type="binding site" evidence="1">
    <location>
        <position position="181"/>
    </location>
    <ligand>
        <name>[4Fe-4S] cluster</name>
        <dbReference type="ChEBI" id="CHEBI:49883"/>
        <label>2</label>
        <note>4Fe-4S-S-AdoMet</note>
    </ligand>
</feature>
<feature type="binding site" evidence="1">
    <location>
        <position position="185"/>
    </location>
    <ligand>
        <name>[4Fe-4S] cluster</name>
        <dbReference type="ChEBI" id="CHEBI:49883"/>
        <label>2</label>
        <note>4Fe-4S-S-AdoMet</note>
    </ligand>
</feature>
<feature type="binding site" evidence="1">
    <location>
        <position position="188"/>
    </location>
    <ligand>
        <name>[4Fe-4S] cluster</name>
        <dbReference type="ChEBI" id="CHEBI:49883"/>
        <label>2</label>
        <note>4Fe-4S-S-AdoMet</note>
    </ligand>
</feature>
<feature type="binding site" evidence="1">
    <location>
        <position position="396"/>
    </location>
    <ligand>
        <name>[4Fe-4S] cluster</name>
        <dbReference type="ChEBI" id="CHEBI:49883"/>
        <label>1</label>
    </ligand>
</feature>
<proteinExistence type="inferred from homology"/>
<protein>
    <recommendedName>
        <fullName evidence="1">Lipoyl synthase, mitochondrial</fullName>
        <ecNumber evidence="1">2.8.1.8</ecNumber>
    </recommendedName>
    <alternativeName>
        <fullName evidence="1">Lipoate synthase</fullName>
        <shortName evidence="1">LS</shortName>
        <shortName evidence="1">Lip-syn</shortName>
    </alternativeName>
    <alternativeName>
        <fullName evidence="1">Lipoic acid synthase</fullName>
    </alternativeName>
</protein>
<accession>A6ZP42</accession>
<keyword id="KW-0004">4Fe-4S</keyword>
<keyword id="KW-0408">Iron</keyword>
<keyword id="KW-0411">Iron-sulfur</keyword>
<keyword id="KW-0479">Metal-binding</keyword>
<keyword id="KW-0496">Mitochondrion</keyword>
<keyword id="KW-0949">S-adenosyl-L-methionine</keyword>
<keyword id="KW-0808">Transferase</keyword>
<keyword id="KW-0809">Transit peptide</keyword>
<sequence length="414" mass="46247">MYRRSVGVLFVGRNTRWISSTIRCGTSATRPIRSNALNTDSDNASVRVPVGNSTEVENATSQLTGTSGKRRKGNRKRITEFKDALNLGPSFADFVSGKASKMILDPLEKARQNTEEAKKLPRWLKVPIPKGTNYHKLKGDVKELGLSTVCEEARCPNIGECWGGKDKSKATATIMLLGDTCTRGCRFCSVKTNRTPSKPDPMEPENTAEAIKRWGLGYVVLTTVDRDDLVDGGANHLAETVRKIKQKAPNTLVETLSGDFRGDLKMVDIMAQCGLDVYAHNLETVESLTPHVRDRRATYRQSLSVLERAKATVPSLITKTSIMLGLGETDEQITQTLKDLRNIQCDVVTFGQYMRPTKRHMKVVEYVKPEKFDYWKERALEMGFLYCASGPLVRSSYKAGEAFIENVLKKRNMK</sequence>
<evidence type="ECO:0000255" key="1">
    <source>
        <dbReference type="HAMAP-Rule" id="MF_03123"/>
    </source>
</evidence>
<evidence type="ECO:0000255" key="2">
    <source>
        <dbReference type="PROSITE-ProRule" id="PRU01266"/>
    </source>
</evidence>
<evidence type="ECO:0000256" key="3">
    <source>
        <dbReference type="SAM" id="MobiDB-lite"/>
    </source>
</evidence>
<name>LIPA_YEAS7</name>
<organism>
    <name type="scientific">Saccharomyces cerevisiae (strain YJM789)</name>
    <name type="common">Baker's yeast</name>
    <dbReference type="NCBI Taxonomy" id="307796"/>
    <lineage>
        <taxon>Eukaryota</taxon>
        <taxon>Fungi</taxon>
        <taxon>Dikarya</taxon>
        <taxon>Ascomycota</taxon>
        <taxon>Saccharomycotina</taxon>
        <taxon>Saccharomycetes</taxon>
        <taxon>Saccharomycetales</taxon>
        <taxon>Saccharomycetaceae</taxon>
        <taxon>Saccharomyces</taxon>
    </lineage>
</organism>